<evidence type="ECO:0000255" key="1">
    <source>
        <dbReference type="HAMAP-Rule" id="MF_00050"/>
    </source>
</evidence>
<sequence length="309" mass="33789">MSEINISAVAVKELREKTGAGMMDCKKALIETSGNFEEAIDFLRKKGLAAAAKKAGRIASEGLTAAKVDGLTGVVIEVNSETDFVARNEQFQDLVKEIANLAVIAKTIDTLKTFKMQSGKSVEEEVIENIATIGENLTLRRMDVLEISEGAIGSYVHNEVVPNLGKISVLVGLVSNAKDKAKLEALAKQIAVHVAGNNPQSIDDSSLDQALVERERKVFFEKSKEEGKPDNIIAKMVEGRIRKFFSEVVLLQQNFLFEPKLTVAEVIKNAEKELGAEIKIAKFIRYELGEGIEHEEKNFADEVAAITQG</sequence>
<reference key="1">
    <citation type="submission" date="2007-09" db="EMBL/GenBank/DDBJ databases">
        <title>Complete genome sequence of Rickettsia rickettsii.</title>
        <authorList>
            <person name="Madan A."/>
            <person name="Fahey J."/>
            <person name="Helton E."/>
            <person name="Ketteman M."/>
            <person name="Madan A."/>
            <person name="Rodrigues S."/>
            <person name="Sanchez A."/>
            <person name="Dasch G."/>
            <person name="Eremeeva M."/>
        </authorList>
    </citation>
    <scope>NUCLEOTIDE SEQUENCE [LARGE SCALE GENOMIC DNA]</scope>
    <source>
        <strain>Sheila Smith</strain>
    </source>
</reference>
<name>EFTS_RICRS</name>
<proteinExistence type="inferred from homology"/>
<feature type="chain" id="PRO_1000006168" description="Elongation factor Ts">
    <location>
        <begin position="1"/>
        <end position="309"/>
    </location>
</feature>
<feature type="region of interest" description="Involved in Mg(2+) ion dislocation from EF-Tu" evidence="1">
    <location>
        <begin position="82"/>
        <end position="85"/>
    </location>
</feature>
<gene>
    <name evidence="1" type="primary">tsf</name>
    <name type="ordered locus">A1G_00685</name>
</gene>
<dbReference type="EMBL" id="CP000848">
    <property type="protein sequence ID" value="ABV75723.1"/>
    <property type="molecule type" value="Genomic_DNA"/>
</dbReference>
<dbReference type="RefSeq" id="WP_012150338.1">
    <property type="nucleotide sequence ID" value="NZ_CP121767.1"/>
</dbReference>
<dbReference type="SMR" id="A8GQP8"/>
<dbReference type="GeneID" id="79936913"/>
<dbReference type="KEGG" id="rri:A1G_00685"/>
<dbReference type="HOGENOM" id="CLU_047155_2_0_5"/>
<dbReference type="Proteomes" id="UP000006832">
    <property type="component" value="Chromosome"/>
</dbReference>
<dbReference type="GO" id="GO:0005737">
    <property type="term" value="C:cytoplasm"/>
    <property type="evidence" value="ECO:0007669"/>
    <property type="project" value="UniProtKB-SubCell"/>
</dbReference>
<dbReference type="GO" id="GO:0003746">
    <property type="term" value="F:translation elongation factor activity"/>
    <property type="evidence" value="ECO:0007669"/>
    <property type="project" value="UniProtKB-UniRule"/>
</dbReference>
<dbReference type="CDD" id="cd14275">
    <property type="entry name" value="UBA_EF-Ts"/>
    <property type="match status" value="1"/>
</dbReference>
<dbReference type="FunFam" id="1.10.286.20:FF:000001">
    <property type="entry name" value="Elongation factor Ts"/>
    <property type="match status" value="1"/>
</dbReference>
<dbReference type="FunFam" id="1.10.8.10:FF:000001">
    <property type="entry name" value="Elongation factor Ts"/>
    <property type="match status" value="1"/>
</dbReference>
<dbReference type="Gene3D" id="1.10.286.20">
    <property type="match status" value="1"/>
</dbReference>
<dbReference type="Gene3D" id="1.10.8.10">
    <property type="entry name" value="DNA helicase RuvA subunit, C-terminal domain"/>
    <property type="match status" value="1"/>
</dbReference>
<dbReference type="Gene3D" id="3.30.479.20">
    <property type="entry name" value="Elongation factor Ts, dimerisation domain"/>
    <property type="match status" value="2"/>
</dbReference>
<dbReference type="HAMAP" id="MF_00050">
    <property type="entry name" value="EF_Ts"/>
    <property type="match status" value="1"/>
</dbReference>
<dbReference type="InterPro" id="IPR036402">
    <property type="entry name" value="EF-Ts_dimer_sf"/>
</dbReference>
<dbReference type="InterPro" id="IPR001816">
    <property type="entry name" value="Transl_elong_EFTs/EF1B"/>
</dbReference>
<dbReference type="InterPro" id="IPR014039">
    <property type="entry name" value="Transl_elong_EFTs/EF1B_dimer"/>
</dbReference>
<dbReference type="InterPro" id="IPR018101">
    <property type="entry name" value="Transl_elong_Ts_CS"/>
</dbReference>
<dbReference type="InterPro" id="IPR009060">
    <property type="entry name" value="UBA-like_sf"/>
</dbReference>
<dbReference type="NCBIfam" id="TIGR00116">
    <property type="entry name" value="tsf"/>
    <property type="match status" value="1"/>
</dbReference>
<dbReference type="PANTHER" id="PTHR11741">
    <property type="entry name" value="ELONGATION FACTOR TS"/>
    <property type="match status" value="1"/>
</dbReference>
<dbReference type="PANTHER" id="PTHR11741:SF0">
    <property type="entry name" value="ELONGATION FACTOR TS, MITOCHONDRIAL"/>
    <property type="match status" value="1"/>
</dbReference>
<dbReference type="Pfam" id="PF00889">
    <property type="entry name" value="EF_TS"/>
    <property type="match status" value="1"/>
</dbReference>
<dbReference type="SUPFAM" id="SSF54713">
    <property type="entry name" value="Elongation factor Ts (EF-Ts), dimerisation domain"/>
    <property type="match status" value="2"/>
</dbReference>
<dbReference type="SUPFAM" id="SSF46934">
    <property type="entry name" value="UBA-like"/>
    <property type="match status" value="1"/>
</dbReference>
<dbReference type="PROSITE" id="PS01126">
    <property type="entry name" value="EF_TS_1"/>
    <property type="match status" value="1"/>
</dbReference>
<dbReference type="PROSITE" id="PS01127">
    <property type="entry name" value="EF_TS_2"/>
    <property type="match status" value="1"/>
</dbReference>
<organism>
    <name type="scientific">Rickettsia rickettsii (strain Sheila Smith)</name>
    <dbReference type="NCBI Taxonomy" id="392021"/>
    <lineage>
        <taxon>Bacteria</taxon>
        <taxon>Pseudomonadati</taxon>
        <taxon>Pseudomonadota</taxon>
        <taxon>Alphaproteobacteria</taxon>
        <taxon>Rickettsiales</taxon>
        <taxon>Rickettsiaceae</taxon>
        <taxon>Rickettsieae</taxon>
        <taxon>Rickettsia</taxon>
        <taxon>spotted fever group</taxon>
    </lineage>
</organism>
<protein>
    <recommendedName>
        <fullName evidence="1">Elongation factor Ts</fullName>
        <shortName evidence="1">EF-Ts</shortName>
    </recommendedName>
</protein>
<accession>A8GQP8</accession>
<comment type="function">
    <text evidence="1">Associates with the EF-Tu.GDP complex and induces the exchange of GDP to GTP. It remains bound to the aminoacyl-tRNA.EF-Tu.GTP complex up to the GTP hydrolysis stage on the ribosome.</text>
</comment>
<comment type="subcellular location">
    <subcellularLocation>
        <location evidence="1">Cytoplasm</location>
    </subcellularLocation>
</comment>
<comment type="similarity">
    <text evidence="1">Belongs to the EF-Ts family.</text>
</comment>
<keyword id="KW-0963">Cytoplasm</keyword>
<keyword id="KW-0251">Elongation factor</keyword>
<keyword id="KW-0648">Protein biosynthesis</keyword>